<sequence length="172" mass="18351">MFDIGWSELLVIGVVALIAIGPKELPGVLRMVGQWMGKARKMASEFQGQFNEAMREAEMADLKKSFDDIKATANTFSRDNIMTSLQKDVDAAMTIDKIEHIDTSPVEPTTPEPPTAETLLEAETHAASISAATAVTEVGEPLAITQEIHPALPSPEPAAAIAIAPIKDAKAS</sequence>
<protein>
    <recommendedName>
        <fullName evidence="1">Sec-independent protein translocase protein TatB</fullName>
    </recommendedName>
</protein>
<dbReference type="EMBL" id="CP000301">
    <property type="protein sequence ID" value="ABD88065.1"/>
    <property type="molecule type" value="Genomic_DNA"/>
</dbReference>
<dbReference type="SMR" id="Q214X1"/>
<dbReference type="STRING" id="316056.RPC_2514"/>
<dbReference type="KEGG" id="rpc:RPC_2514"/>
<dbReference type="eggNOG" id="COG1826">
    <property type="taxonomic scope" value="Bacteria"/>
</dbReference>
<dbReference type="HOGENOM" id="CLU_086034_1_3_5"/>
<dbReference type="OrthoDB" id="7206969at2"/>
<dbReference type="GO" id="GO:0033281">
    <property type="term" value="C:TAT protein transport complex"/>
    <property type="evidence" value="ECO:0007669"/>
    <property type="project" value="UniProtKB-UniRule"/>
</dbReference>
<dbReference type="GO" id="GO:0008320">
    <property type="term" value="F:protein transmembrane transporter activity"/>
    <property type="evidence" value="ECO:0007669"/>
    <property type="project" value="UniProtKB-UniRule"/>
</dbReference>
<dbReference type="GO" id="GO:0043953">
    <property type="term" value="P:protein transport by the Tat complex"/>
    <property type="evidence" value="ECO:0007669"/>
    <property type="project" value="UniProtKB-UniRule"/>
</dbReference>
<dbReference type="Gene3D" id="1.20.5.3310">
    <property type="match status" value="1"/>
</dbReference>
<dbReference type="HAMAP" id="MF_00237">
    <property type="entry name" value="TatB"/>
    <property type="match status" value="1"/>
</dbReference>
<dbReference type="InterPro" id="IPR003369">
    <property type="entry name" value="TatA/B/E"/>
</dbReference>
<dbReference type="InterPro" id="IPR018448">
    <property type="entry name" value="TatB"/>
</dbReference>
<dbReference type="NCBIfam" id="TIGR01410">
    <property type="entry name" value="tatB"/>
    <property type="match status" value="1"/>
</dbReference>
<dbReference type="PANTHER" id="PTHR33162">
    <property type="entry name" value="SEC-INDEPENDENT PROTEIN TRANSLOCASE PROTEIN TATA, CHLOROPLASTIC"/>
    <property type="match status" value="1"/>
</dbReference>
<dbReference type="PANTHER" id="PTHR33162:SF1">
    <property type="entry name" value="SEC-INDEPENDENT PROTEIN TRANSLOCASE PROTEIN TATA, CHLOROPLASTIC"/>
    <property type="match status" value="1"/>
</dbReference>
<dbReference type="Pfam" id="PF02416">
    <property type="entry name" value="TatA_B_E"/>
    <property type="match status" value="1"/>
</dbReference>
<dbReference type="PRINTS" id="PR01506">
    <property type="entry name" value="TATBPROTEIN"/>
</dbReference>
<name>TATB_RHOPB</name>
<gene>
    <name evidence="1" type="primary">tatB</name>
    <name type="ordered locus">RPC_2514</name>
</gene>
<keyword id="KW-0997">Cell inner membrane</keyword>
<keyword id="KW-1003">Cell membrane</keyword>
<keyword id="KW-0472">Membrane</keyword>
<keyword id="KW-0653">Protein transport</keyword>
<keyword id="KW-0811">Translocation</keyword>
<keyword id="KW-0812">Transmembrane</keyword>
<keyword id="KW-1133">Transmembrane helix</keyword>
<keyword id="KW-0813">Transport</keyword>
<comment type="function">
    <text evidence="1">Part of the twin-arginine translocation (Tat) system that transports large folded proteins containing a characteristic twin-arginine motif in their signal peptide across membranes. Together with TatC, TatB is part of a receptor directly interacting with Tat signal peptides. TatB may form an oligomeric binding site that transiently accommodates folded Tat precursor proteins before their translocation.</text>
</comment>
<comment type="subunit">
    <text evidence="1">The Tat system comprises two distinct complexes: a TatABC complex, containing multiple copies of TatA, TatB and TatC subunits, and a separate TatA complex, containing only TatA subunits. Substrates initially bind to the TatABC complex, which probably triggers association of the separate TatA complex to form the active translocon.</text>
</comment>
<comment type="subcellular location">
    <subcellularLocation>
        <location evidence="1">Cell inner membrane</location>
        <topology evidence="1">Single-pass membrane protein</topology>
    </subcellularLocation>
</comment>
<comment type="similarity">
    <text evidence="1">Belongs to the TatB family.</text>
</comment>
<organism>
    <name type="scientific">Rhodopseudomonas palustris (strain BisB18)</name>
    <dbReference type="NCBI Taxonomy" id="316056"/>
    <lineage>
        <taxon>Bacteria</taxon>
        <taxon>Pseudomonadati</taxon>
        <taxon>Pseudomonadota</taxon>
        <taxon>Alphaproteobacteria</taxon>
        <taxon>Hyphomicrobiales</taxon>
        <taxon>Nitrobacteraceae</taxon>
        <taxon>Rhodopseudomonas</taxon>
    </lineage>
</organism>
<reference key="1">
    <citation type="submission" date="2006-03" db="EMBL/GenBank/DDBJ databases">
        <title>Complete sequence of Rhodopseudomonas palustris BisB18.</title>
        <authorList>
            <consortium name="US DOE Joint Genome Institute"/>
            <person name="Copeland A."/>
            <person name="Lucas S."/>
            <person name="Lapidus A."/>
            <person name="Barry K."/>
            <person name="Detter J.C."/>
            <person name="Glavina del Rio T."/>
            <person name="Hammon N."/>
            <person name="Israni S."/>
            <person name="Dalin E."/>
            <person name="Tice H."/>
            <person name="Pitluck S."/>
            <person name="Chain P."/>
            <person name="Malfatti S."/>
            <person name="Shin M."/>
            <person name="Vergez L."/>
            <person name="Schmutz J."/>
            <person name="Larimer F."/>
            <person name="Land M."/>
            <person name="Hauser L."/>
            <person name="Pelletier D.A."/>
            <person name="Kyrpides N."/>
            <person name="Anderson I."/>
            <person name="Oda Y."/>
            <person name="Harwood C.S."/>
            <person name="Richardson P."/>
        </authorList>
    </citation>
    <scope>NUCLEOTIDE SEQUENCE [LARGE SCALE GENOMIC DNA]</scope>
    <source>
        <strain>BisB18</strain>
    </source>
</reference>
<evidence type="ECO:0000255" key="1">
    <source>
        <dbReference type="HAMAP-Rule" id="MF_00237"/>
    </source>
</evidence>
<proteinExistence type="inferred from homology"/>
<feature type="chain" id="PRO_0000301225" description="Sec-independent protein translocase protein TatB">
    <location>
        <begin position="1"/>
        <end position="172"/>
    </location>
</feature>
<feature type="transmembrane region" description="Helical" evidence="1">
    <location>
        <begin position="1"/>
        <end position="21"/>
    </location>
</feature>
<accession>Q214X1</accession>